<reference key="1">
    <citation type="journal article" date="2001" name="Proc. Natl. Acad. Sci. U.S.A.">
        <title>Complete genome sequence of an M1 strain of Streptococcus pyogenes.</title>
        <authorList>
            <person name="Ferretti J.J."/>
            <person name="McShan W.M."/>
            <person name="Ajdic D.J."/>
            <person name="Savic D.J."/>
            <person name="Savic G."/>
            <person name="Lyon K."/>
            <person name="Primeaux C."/>
            <person name="Sezate S."/>
            <person name="Suvorov A.N."/>
            <person name="Kenton S."/>
            <person name="Lai H.S."/>
            <person name="Lin S.P."/>
            <person name="Qian Y."/>
            <person name="Jia H.G."/>
            <person name="Najar F.Z."/>
            <person name="Ren Q."/>
            <person name="Zhu H."/>
            <person name="Song L."/>
            <person name="White J."/>
            <person name="Yuan X."/>
            <person name="Clifton S.W."/>
            <person name="Roe B.A."/>
            <person name="McLaughlin R.E."/>
        </authorList>
    </citation>
    <scope>NUCLEOTIDE SEQUENCE [LARGE SCALE GENOMIC DNA]</scope>
    <source>
        <strain>ATCC 700294 / SF370 / Serotype M1</strain>
    </source>
</reference>
<reference key="2">
    <citation type="journal article" date="2005" name="J. Infect. Dis.">
        <title>Evolutionary origin and emergence of a highly successful clone of serotype M1 group A Streptococcus involved multiple horizontal gene transfer events.</title>
        <authorList>
            <person name="Sumby P."/>
            <person name="Porcella S.F."/>
            <person name="Madrigal A.G."/>
            <person name="Barbian K.D."/>
            <person name="Virtaneva K."/>
            <person name="Ricklefs S.M."/>
            <person name="Sturdevant D.E."/>
            <person name="Graham M.R."/>
            <person name="Vuopio-Varkila J."/>
            <person name="Hoe N.P."/>
            <person name="Musser J.M."/>
        </authorList>
    </citation>
    <scope>NUCLEOTIDE SEQUENCE [LARGE SCALE GENOMIC DNA]</scope>
    <source>
        <strain>ATCC BAA-947 / MGAS5005 / Serotype M1</strain>
    </source>
</reference>
<comment type="function">
    <text evidence="1">Catalyzes the reversible conversion of ribose-5-phosphate to ribulose 5-phosphate.</text>
</comment>
<comment type="catalytic activity">
    <reaction evidence="1">
        <text>aldehydo-D-ribose 5-phosphate = D-ribulose 5-phosphate</text>
        <dbReference type="Rhea" id="RHEA:14657"/>
        <dbReference type="ChEBI" id="CHEBI:58121"/>
        <dbReference type="ChEBI" id="CHEBI:58273"/>
        <dbReference type="EC" id="5.3.1.6"/>
    </reaction>
</comment>
<comment type="pathway">
    <text evidence="1">Carbohydrate degradation; pentose phosphate pathway; D-ribose 5-phosphate from D-ribulose 5-phosphate (non-oxidative stage): step 1/1.</text>
</comment>
<comment type="subunit">
    <text evidence="1">Homodimer.</text>
</comment>
<comment type="similarity">
    <text evidence="1">Belongs to the ribose 5-phosphate isomerase family.</text>
</comment>
<gene>
    <name evidence="1" type="primary">rpiA</name>
    <name type="ordered locus">SPy_0889</name>
    <name type="ordered locus">M5005_Spy0695</name>
</gene>
<proteinExistence type="inferred from homology"/>
<name>RPIA_STRP1</name>
<evidence type="ECO:0000255" key="1">
    <source>
        <dbReference type="HAMAP-Rule" id="MF_00170"/>
    </source>
</evidence>
<accession>P66697</accession>
<accession>Q48ZA5</accession>
<accession>Q9A085</accession>
<protein>
    <recommendedName>
        <fullName evidence="1">Ribose-5-phosphate isomerase A</fullName>
        <ecNumber evidence="1">5.3.1.6</ecNumber>
    </recommendedName>
    <alternativeName>
        <fullName evidence="1">Phosphoriboisomerase A</fullName>
        <shortName evidence="1">PRI</shortName>
    </alternativeName>
</protein>
<sequence>MEALKKIAGVTAAQYVTDGMTIGLGTGSTAYYFVEEIGRRVKQEGLQVVGVTTSSVTSKQAEVLGIPLKSIDDIDSIDLTVDGADEVDKNFNGIKGGGAALLMEKIVATPTKEYIWVVDASKMVEHLGAFKLPVEVVQYGADRLFRVFEKAGYKPSFRMKGDSRLVTDMQNYIIDLDLGCIKDPVAFGHLLDGTVGVVEHGLFNGMVDKVIVASKDGVTVLEAPTAG</sequence>
<organism>
    <name type="scientific">Streptococcus pyogenes serotype M1</name>
    <dbReference type="NCBI Taxonomy" id="301447"/>
    <lineage>
        <taxon>Bacteria</taxon>
        <taxon>Bacillati</taxon>
        <taxon>Bacillota</taxon>
        <taxon>Bacilli</taxon>
        <taxon>Lactobacillales</taxon>
        <taxon>Streptococcaceae</taxon>
        <taxon>Streptococcus</taxon>
    </lineage>
</organism>
<feature type="chain" id="PRO_0000158476" description="Ribose-5-phosphate isomerase A">
    <location>
        <begin position="1"/>
        <end position="227"/>
    </location>
</feature>
<feature type="active site" description="Proton acceptor" evidence="1">
    <location>
        <position position="104"/>
    </location>
</feature>
<feature type="binding site" evidence="1">
    <location>
        <begin position="26"/>
        <end position="29"/>
    </location>
    <ligand>
        <name>substrate</name>
    </ligand>
</feature>
<feature type="binding site" evidence="1">
    <location>
        <begin position="82"/>
        <end position="85"/>
    </location>
    <ligand>
        <name>substrate</name>
    </ligand>
</feature>
<feature type="binding site" evidence="1">
    <location>
        <begin position="95"/>
        <end position="98"/>
    </location>
    <ligand>
        <name>substrate</name>
    </ligand>
</feature>
<feature type="binding site" evidence="1">
    <location>
        <position position="122"/>
    </location>
    <ligand>
        <name>substrate</name>
    </ligand>
</feature>
<keyword id="KW-0413">Isomerase</keyword>
<keyword id="KW-1185">Reference proteome</keyword>
<dbReference type="EC" id="5.3.1.6" evidence="1"/>
<dbReference type="EMBL" id="AE004092">
    <property type="protein sequence ID" value="AAK33809.1"/>
    <property type="molecule type" value="Genomic_DNA"/>
</dbReference>
<dbReference type="EMBL" id="CP000017">
    <property type="protein sequence ID" value="AAZ51313.1"/>
    <property type="molecule type" value="Genomic_DNA"/>
</dbReference>
<dbReference type="RefSeq" id="NP_269088.1">
    <property type="nucleotide sequence ID" value="NC_002737.2"/>
</dbReference>
<dbReference type="SMR" id="P66697"/>
<dbReference type="PaxDb" id="1314-HKU360_00704"/>
<dbReference type="KEGG" id="spy:SPy_0889"/>
<dbReference type="KEGG" id="spz:M5005_Spy0695"/>
<dbReference type="PATRIC" id="fig|160490.10.peg.765"/>
<dbReference type="HOGENOM" id="CLU_056590_1_0_9"/>
<dbReference type="OMA" id="ACHVQEK"/>
<dbReference type="UniPathway" id="UPA00115">
    <property type="reaction ID" value="UER00412"/>
</dbReference>
<dbReference type="Proteomes" id="UP000000750">
    <property type="component" value="Chromosome"/>
</dbReference>
<dbReference type="GO" id="GO:0004751">
    <property type="term" value="F:ribose-5-phosphate isomerase activity"/>
    <property type="evidence" value="ECO:0007669"/>
    <property type="project" value="UniProtKB-UniRule"/>
</dbReference>
<dbReference type="GO" id="GO:0009052">
    <property type="term" value="P:pentose-phosphate shunt, non-oxidative branch"/>
    <property type="evidence" value="ECO:0007669"/>
    <property type="project" value="UniProtKB-UniRule"/>
</dbReference>
<dbReference type="CDD" id="cd01398">
    <property type="entry name" value="RPI_A"/>
    <property type="match status" value="1"/>
</dbReference>
<dbReference type="FunFam" id="3.40.50.1360:FF:000001">
    <property type="entry name" value="Ribose-5-phosphate isomerase A"/>
    <property type="match status" value="1"/>
</dbReference>
<dbReference type="Gene3D" id="3.30.70.260">
    <property type="match status" value="1"/>
</dbReference>
<dbReference type="Gene3D" id="3.40.50.1360">
    <property type="match status" value="1"/>
</dbReference>
<dbReference type="HAMAP" id="MF_00170">
    <property type="entry name" value="Rib_5P_isom_A"/>
    <property type="match status" value="1"/>
</dbReference>
<dbReference type="InterPro" id="IPR037171">
    <property type="entry name" value="NagB/RpiA_transferase-like"/>
</dbReference>
<dbReference type="InterPro" id="IPR050262">
    <property type="entry name" value="Ribose-5P_isomerase"/>
</dbReference>
<dbReference type="InterPro" id="IPR020672">
    <property type="entry name" value="Ribose5P_isomerase_typA_subgr"/>
</dbReference>
<dbReference type="InterPro" id="IPR004788">
    <property type="entry name" value="Ribose5P_isomerase_type_A"/>
</dbReference>
<dbReference type="NCBIfam" id="NF001924">
    <property type="entry name" value="PRK00702.1"/>
    <property type="match status" value="1"/>
</dbReference>
<dbReference type="NCBIfam" id="TIGR00021">
    <property type="entry name" value="rpiA"/>
    <property type="match status" value="1"/>
</dbReference>
<dbReference type="PANTHER" id="PTHR43748">
    <property type="entry name" value="RIBOSE-5-PHOSPHATE ISOMERASE 3, CHLOROPLASTIC-RELATED"/>
    <property type="match status" value="1"/>
</dbReference>
<dbReference type="PANTHER" id="PTHR43748:SF3">
    <property type="entry name" value="RIBOSE-5-PHOSPHATE ISOMERASE 3, CHLOROPLASTIC-RELATED"/>
    <property type="match status" value="1"/>
</dbReference>
<dbReference type="Pfam" id="PF06026">
    <property type="entry name" value="Rib_5-P_isom_A"/>
    <property type="match status" value="1"/>
</dbReference>
<dbReference type="SUPFAM" id="SSF75445">
    <property type="entry name" value="D-ribose-5-phosphate isomerase (RpiA), lid domain"/>
    <property type="match status" value="1"/>
</dbReference>
<dbReference type="SUPFAM" id="SSF100950">
    <property type="entry name" value="NagB/RpiA/CoA transferase-like"/>
    <property type="match status" value="1"/>
</dbReference>